<organismHost>
    <name type="scientific">Homo sapiens</name>
    <name type="common">Human</name>
    <dbReference type="NCBI Taxonomy" id="9606"/>
</organismHost>
<dbReference type="EMBL" id="U11492">
    <property type="protein sequence ID" value="AAA75585.1"/>
    <property type="molecule type" value="mRNA"/>
</dbReference>
<dbReference type="EMBL" id="EF672613">
    <property type="protein sequence ID" value="ABV53293.1"/>
    <property type="molecule type" value="Genomic_RNA"/>
</dbReference>
<dbReference type="SMR" id="Q82045"/>
<dbReference type="Proteomes" id="UP000007048">
    <property type="component" value="Genome"/>
</dbReference>
<dbReference type="GO" id="GO:0030430">
    <property type="term" value="C:host cell cytoplasm"/>
    <property type="evidence" value="ECO:0007669"/>
    <property type="project" value="UniProtKB-UniRule"/>
</dbReference>
<dbReference type="GO" id="GO:0044163">
    <property type="term" value="C:host cytoskeleton"/>
    <property type="evidence" value="ECO:0007669"/>
    <property type="project" value="UniProtKB-SubCell"/>
</dbReference>
<dbReference type="GO" id="GO:0046872">
    <property type="term" value="F:metal ion binding"/>
    <property type="evidence" value="ECO:0007669"/>
    <property type="project" value="UniProtKB-UniRule"/>
</dbReference>
<dbReference type="GO" id="GO:0003723">
    <property type="term" value="F:RNA binding"/>
    <property type="evidence" value="ECO:0007669"/>
    <property type="project" value="UniProtKB-UniRule"/>
</dbReference>
<dbReference type="GO" id="GO:0039548">
    <property type="term" value="P:symbiont-mediated suppression of host cytoplasmic pattern recognition receptor signaling pathway via inhibition of IRF3 activity"/>
    <property type="evidence" value="ECO:0007669"/>
    <property type="project" value="UniProtKB-UniRule"/>
</dbReference>
<dbReference type="GO" id="GO:0039557">
    <property type="term" value="P:symbiont-mediated suppression of host cytoplasmic pattern recognition receptor signaling pathway via inhibition of IRF7 activity"/>
    <property type="evidence" value="ECO:0007669"/>
    <property type="project" value="UniProtKB-UniRule"/>
</dbReference>
<dbReference type="GO" id="GO:0085034">
    <property type="term" value="P:symbiont-mediated suppression of host NF-kappaB cascade"/>
    <property type="evidence" value="ECO:0007669"/>
    <property type="project" value="UniProtKB-UniRule"/>
</dbReference>
<dbReference type="HAMAP" id="MF_04088">
    <property type="entry name" value="ROTA_NSP1"/>
    <property type="match status" value="1"/>
</dbReference>
<dbReference type="InterPro" id="IPR002148">
    <property type="entry name" value="Rotavirus_NSP1"/>
</dbReference>
<dbReference type="Pfam" id="PF00981">
    <property type="entry name" value="Rota_NS53"/>
    <property type="match status" value="1"/>
</dbReference>
<feature type="chain" id="PRO_0000369086" description="Non-structural protein 1">
    <location>
        <begin position="1"/>
        <end position="486"/>
    </location>
</feature>
<feature type="region of interest" description="RNA-binding" evidence="1">
    <location>
        <begin position="1"/>
        <end position="81"/>
    </location>
</feature>
<feature type="region of interest" description="Zinc-binding domain" evidence="1">
    <location>
        <begin position="42"/>
        <end position="79"/>
    </location>
</feature>
<feature type="region of interest" description="Important for cytoskeleton localization" evidence="1">
    <location>
        <begin position="82"/>
        <end position="176"/>
    </location>
</feature>
<feature type="region of interest" description="Interaction with host IRF3" evidence="1">
    <location>
        <begin position="317"/>
        <end position="486"/>
    </location>
</feature>
<feature type="short sequence motif" description="IKBKB-like degron (ILD) motif" evidence="1">
    <location>
        <begin position="479"/>
        <end position="483"/>
    </location>
</feature>
<feature type="short sequence motif" description="pLxIS motif" evidence="1">
    <location>
        <begin position="480"/>
        <end position="483"/>
    </location>
</feature>
<feature type="sequence conflict" description="In Ref. 2; ABV53293." ref="2">
    <original>D</original>
    <variation>V</variation>
    <location>
        <position position="62"/>
    </location>
</feature>
<feature type="sequence conflict" description="In Ref. 2; ABV53293." ref="2">
    <original>E</original>
    <variation>K</variation>
    <location>
        <position position="264"/>
    </location>
</feature>
<comment type="function">
    <text evidence="1">Plays a role in the inhibition of host innate immunity by inducing the degradation of key host factors required to activate interferon production such as IRF3, IRF5 or IRF7. Associates with components of cullin RING ligases (CRLs) including CUL1 or CUL3, which are essential multisubunit ubiquitination complexes, to modulate their activities. Recognizes the host NF-kappa-B regulator BTRC through the presence of a DSGXS motif in the C-terminal substrate recognition domain.</text>
</comment>
<comment type="subunit">
    <text evidence="1">Interacts (via C-terminus) with host IRF3; this interaction leads to IRF3 degradation. Interacts with host IRF7; this interaction leads to IRF7 degradation. Interacts with host CUL1 and CUL3. Interacts with host BTRC.</text>
</comment>
<comment type="subcellular location">
    <subcellularLocation>
        <location evidence="1">Host cytoplasm</location>
        <location evidence="1">Host cytoskeleton</location>
    </subcellularLocation>
</comment>
<comment type="domain">
    <text evidence="1">The integrity of the zinc-binding domain in NSP1 is important for degradation of host IRF3.</text>
</comment>
<comment type="domain">
    <text evidence="1">The pLxIS motif targets host IRF3 for degradation; however phosphorylation of NSP1 pLxIS motif is not required for its activity.</text>
</comment>
<comment type="PTM">
    <text evidence="1">The C-terminal region is phosphorylated by host CKII/CSNK2A1. Phosphorylation of the DSGXS motif is essential for host NF-kappa-B inhibition.</text>
</comment>
<comment type="similarity">
    <text evidence="1">Belongs to the rotavirus NSP1 family.</text>
</comment>
<protein>
    <recommendedName>
        <fullName evidence="1">Non-structural protein 1</fullName>
        <shortName evidence="1">NSP1</shortName>
    </recommendedName>
    <alternativeName>
        <fullName evidence="1">NCVP2</fullName>
    </alternativeName>
    <alternativeName>
        <fullName evidence="1">Non-structural RNA-binding protein 53</fullName>
        <shortName evidence="1">NS53</shortName>
    </alternativeName>
</protein>
<sequence>MATFKDACYYYKRINKLNHVVLKLGVNDTWRPSPPTKYKGWCLDCCQHTDLTYCQGCTMYHDCQWCSQYGRCFLDSEPHLLRMRTFKNEVTKNDLMNLIDMYNTLFPINQKIVDKFINSTRQHKCRNECMTQWYNHLLMPITLQSLSIELDGDVYYVFGYYDSMSDINQTPFSFANLIDIYDKLLLDNINFNRMSFLPVALQQEYALRYFSKSRFISEKRKCVSDLHFSANVIENLHNPSFKIQITRNCIELSSDWNGACKLVEDVSAYFDMLKTSHIEFYSISTRCRVFTQHKLKMASKHIKPNYVTSNHRTSATEVHNCKWCSINNSYAVWNDFRVKKIYDNIFNFLRALVKSNANVGHCSSQEKIYEHIEDVLDVCDDEKWKTAVTEIFNCLEPVELDAVKYVLFNHEVNWDVINLLVQSVGKVPQILTLNDIVIIMKSIIYEWFDIRYMRNTPMTTFTVDKLRQLCTGVKTVDYDSGISDVE</sequence>
<accession>Q82045</accession>
<accession>B3SRW8</accession>
<organism>
    <name type="scientific">Rotavirus A (strain RVA/Human/United Kingdom/ST3/1975/G4P2A[6])</name>
    <name type="common">RV-A</name>
    <name type="synonym">Rotavirus A (strain St. Thomas 3)</name>
    <dbReference type="NCBI Taxonomy" id="10960"/>
    <lineage>
        <taxon>Viruses</taxon>
        <taxon>Riboviria</taxon>
        <taxon>Orthornavirae</taxon>
        <taxon>Duplornaviricota</taxon>
        <taxon>Resentoviricetes</taxon>
        <taxon>Reovirales</taxon>
        <taxon>Sedoreoviridae</taxon>
        <taxon>Rotavirus</taxon>
        <taxon>Rotavirus A</taxon>
    </lineage>
</organism>
<proteinExistence type="evidence at transcript level"/>
<reference key="1">
    <citation type="journal article" date="1994" name="J. Gen. Virol.">
        <title>Genetic analysis of NSP1 genes of human rotaviruses isolated from neonates with asymptomatic infection.</title>
        <authorList>
            <person name="Palombo E.A."/>
            <person name="Bishop R.F."/>
        </authorList>
    </citation>
    <scope>NUCLEOTIDE SEQUENCE [MRNA]</scope>
</reference>
<reference key="2">
    <citation type="journal article" date="2008" name="J. Virol.">
        <title>Group A human rotavirus genomics: evidence that gene constellations are influenced by viral protein interactions.</title>
        <authorList>
            <person name="Heiman E.M."/>
            <person name="McDonald S.M."/>
            <person name="Barro M."/>
            <person name="Taraporewala Z.F."/>
            <person name="Bar-Magen T."/>
            <person name="Patton J.T."/>
        </authorList>
    </citation>
    <scope>NUCLEOTIDE SEQUENCE [GENOMIC RNA]</scope>
</reference>
<evidence type="ECO:0000255" key="1">
    <source>
        <dbReference type="HAMAP-Rule" id="MF_04088"/>
    </source>
</evidence>
<name>NSP1_ROTHT</name>
<keyword id="KW-1035">Host cytoplasm</keyword>
<keyword id="KW-1037">Host cytoskeleton</keyword>
<keyword id="KW-0945">Host-virus interaction</keyword>
<keyword id="KW-1090">Inhibition of host innate immune response by virus</keyword>
<keyword id="KW-1092">Inhibition of host IRF3 by virus</keyword>
<keyword id="KW-1093">Inhibition of host IRF7 by virus</keyword>
<keyword id="KW-1100">Inhibition of host NF-kappa-B by virus</keyword>
<keyword id="KW-1113">Inhibition of host RLR pathway by virus</keyword>
<keyword id="KW-0922">Interferon antiviral system evasion</keyword>
<keyword id="KW-0479">Metal-binding</keyword>
<keyword id="KW-0597">Phosphoprotein</keyword>
<keyword id="KW-0694">RNA-binding</keyword>
<keyword id="KW-0899">Viral immunoevasion</keyword>